<reference key="1">
    <citation type="journal article" date="2006" name="Proc. Natl. Acad. Sci. U.S.A.">
        <title>Comparative genomics of the lactic acid bacteria.</title>
        <authorList>
            <person name="Makarova K.S."/>
            <person name="Slesarev A."/>
            <person name="Wolf Y.I."/>
            <person name="Sorokin A."/>
            <person name="Mirkin B."/>
            <person name="Koonin E.V."/>
            <person name="Pavlov A."/>
            <person name="Pavlova N."/>
            <person name="Karamychev V."/>
            <person name="Polouchine N."/>
            <person name="Shakhova V."/>
            <person name="Grigoriev I."/>
            <person name="Lou Y."/>
            <person name="Rohksar D."/>
            <person name="Lucas S."/>
            <person name="Huang K."/>
            <person name="Goodstein D.M."/>
            <person name="Hawkins T."/>
            <person name="Plengvidhya V."/>
            <person name="Welker D."/>
            <person name="Hughes J."/>
            <person name="Goh Y."/>
            <person name="Benson A."/>
            <person name="Baldwin K."/>
            <person name="Lee J.-H."/>
            <person name="Diaz-Muniz I."/>
            <person name="Dosti B."/>
            <person name="Smeianov V."/>
            <person name="Wechter W."/>
            <person name="Barabote R."/>
            <person name="Lorca G."/>
            <person name="Altermann E."/>
            <person name="Barrangou R."/>
            <person name="Ganesan B."/>
            <person name="Xie Y."/>
            <person name="Rawsthorne H."/>
            <person name="Tamir D."/>
            <person name="Parker C."/>
            <person name="Breidt F."/>
            <person name="Broadbent J.R."/>
            <person name="Hutkins R."/>
            <person name="O'Sullivan D."/>
            <person name="Steele J."/>
            <person name="Unlu G."/>
            <person name="Saier M.H. Jr."/>
            <person name="Klaenhammer T."/>
            <person name="Richardson P."/>
            <person name="Kozyavkin S."/>
            <person name="Weimer B.C."/>
            <person name="Mills D.A."/>
        </authorList>
    </citation>
    <scope>NUCLEOTIDE SEQUENCE [LARGE SCALE GENOMIC DNA]</scope>
    <source>
        <strain>SK11</strain>
    </source>
</reference>
<gene>
    <name evidence="1" type="primary">ruvB</name>
    <name type="ordered locus">LACR_2515</name>
</gene>
<proteinExistence type="inferred from homology"/>
<comment type="function">
    <text evidence="1">The RuvA-RuvB-RuvC complex processes Holliday junction (HJ) DNA during genetic recombination and DNA repair, while the RuvA-RuvB complex plays an important role in the rescue of blocked DNA replication forks via replication fork reversal (RFR). RuvA specifically binds to HJ cruciform DNA, conferring on it an open structure. The RuvB hexamer acts as an ATP-dependent pump, pulling dsDNA into and through the RuvAB complex. RuvB forms 2 homohexamers on either side of HJ DNA bound by 1 or 2 RuvA tetramers; 4 subunits per hexamer contact DNA at a time. Coordinated motions by a converter formed by DNA-disengaged RuvB subunits stimulates ATP hydrolysis and nucleotide exchange. Immobilization of the converter enables RuvB to convert the ATP-contained energy into a lever motion, pulling 2 nucleotides of DNA out of the RuvA tetramer per ATP hydrolyzed, thus driving DNA branch migration. The RuvB motors rotate together with the DNA substrate, which together with the progressing nucleotide cycle form the mechanistic basis for DNA recombination by continuous HJ branch migration. Branch migration allows RuvC to scan DNA until it finds its consensus sequence, where it cleaves and resolves cruciform DNA.</text>
</comment>
<comment type="catalytic activity">
    <reaction evidence="1">
        <text>ATP + H2O = ADP + phosphate + H(+)</text>
        <dbReference type="Rhea" id="RHEA:13065"/>
        <dbReference type="ChEBI" id="CHEBI:15377"/>
        <dbReference type="ChEBI" id="CHEBI:15378"/>
        <dbReference type="ChEBI" id="CHEBI:30616"/>
        <dbReference type="ChEBI" id="CHEBI:43474"/>
        <dbReference type="ChEBI" id="CHEBI:456216"/>
    </reaction>
</comment>
<comment type="subunit">
    <text evidence="1">Homohexamer. Forms an RuvA(8)-RuvB(12)-Holliday junction (HJ) complex. HJ DNA is sandwiched between 2 RuvA tetramers; dsDNA enters through RuvA and exits via RuvB. An RuvB hexamer assembles on each DNA strand where it exits the tetramer. Each RuvB hexamer is contacted by two RuvA subunits (via domain III) on 2 adjacent RuvB subunits; this complex drives branch migration. In the full resolvosome a probable DNA-RuvA(4)-RuvB(12)-RuvC(2) complex forms which resolves the HJ.</text>
</comment>
<comment type="subcellular location">
    <subcellularLocation>
        <location evidence="1">Cytoplasm</location>
    </subcellularLocation>
</comment>
<comment type="domain">
    <text evidence="1">Has 3 domains, the large (RuvB-L) and small ATPase (RuvB-S) domains and the C-terminal head (RuvB-H) domain. The head domain binds DNA, while the ATPase domains jointly bind ATP, ADP or are empty depending on the state of the subunit in the translocation cycle. During a single DNA translocation step the structure of each domain remains the same, but their relative positions change.</text>
</comment>
<comment type="similarity">
    <text evidence="1">Belongs to the RuvB family.</text>
</comment>
<evidence type="ECO:0000255" key="1">
    <source>
        <dbReference type="HAMAP-Rule" id="MF_00016"/>
    </source>
</evidence>
<keyword id="KW-0067">ATP-binding</keyword>
<keyword id="KW-0963">Cytoplasm</keyword>
<keyword id="KW-0227">DNA damage</keyword>
<keyword id="KW-0233">DNA recombination</keyword>
<keyword id="KW-0234">DNA repair</keyword>
<keyword id="KW-0238">DNA-binding</keyword>
<keyword id="KW-0378">Hydrolase</keyword>
<keyword id="KW-0547">Nucleotide-binding</keyword>
<sequence length="333" mass="37661">MNDILNKEPMEEDYGIEKSLRPQFFNQYIGQDKVKEQLEIFIKAAKMREEVLDHVLLFGPPGLGKTTMAFVIANELGVNIKQTAGPAIEKPGDLVAILNELEPGDVLFIDEIHRMPMQVEEVLYSAMEDFYIDIMLGSGDGSRSVHLDLPPFTLVGATTRAGMLSNPLRARFGISSHMEYYQERDLEEIVKRTADIFEVEVIDNAAIEIALRSRGTPRIANRLLKRVRDFAQIMGDGRVDKAITDKALTILDVDAAGLDYIDQKILRTMIEMYHGGPVGIGTLAVNIAEDRETVEDMYEPYLIQKGFLMRTKQGRKVTQRAYEHLGYVYNEEE</sequence>
<name>RUVB_LACLS</name>
<feature type="chain" id="PRO_1000001421" description="Holliday junction branch migration complex subunit RuvB">
    <location>
        <begin position="1"/>
        <end position="333"/>
    </location>
</feature>
<feature type="region of interest" description="Large ATPase domain (RuvB-L)" evidence="1">
    <location>
        <begin position="1"/>
        <end position="181"/>
    </location>
</feature>
<feature type="region of interest" description="Small ATPAse domain (RuvB-S)" evidence="1">
    <location>
        <begin position="182"/>
        <end position="252"/>
    </location>
</feature>
<feature type="region of interest" description="Head domain (RuvB-H)" evidence="1">
    <location>
        <begin position="255"/>
        <end position="333"/>
    </location>
</feature>
<feature type="binding site" evidence="1">
    <location>
        <position position="20"/>
    </location>
    <ligand>
        <name>ATP</name>
        <dbReference type="ChEBI" id="CHEBI:30616"/>
    </ligand>
</feature>
<feature type="binding site" evidence="1">
    <location>
        <position position="21"/>
    </location>
    <ligand>
        <name>ATP</name>
        <dbReference type="ChEBI" id="CHEBI:30616"/>
    </ligand>
</feature>
<feature type="binding site" evidence="1">
    <location>
        <position position="62"/>
    </location>
    <ligand>
        <name>ATP</name>
        <dbReference type="ChEBI" id="CHEBI:30616"/>
    </ligand>
</feature>
<feature type="binding site" evidence="1">
    <location>
        <position position="65"/>
    </location>
    <ligand>
        <name>ATP</name>
        <dbReference type="ChEBI" id="CHEBI:30616"/>
    </ligand>
</feature>
<feature type="binding site" evidence="1">
    <location>
        <position position="66"/>
    </location>
    <ligand>
        <name>ATP</name>
        <dbReference type="ChEBI" id="CHEBI:30616"/>
    </ligand>
</feature>
<feature type="binding site" evidence="1">
    <location>
        <position position="66"/>
    </location>
    <ligand>
        <name>Mg(2+)</name>
        <dbReference type="ChEBI" id="CHEBI:18420"/>
    </ligand>
</feature>
<feature type="binding site" evidence="1">
    <location>
        <position position="67"/>
    </location>
    <ligand>
        <name>ATP</name>
        <dbReference type="ChEBI" id="CHEBI:30616"/>
    </ligand>
</feature>
<feature type="binding site" evidence="1">
    <location>
        <begin position="128"/>
        <end position="130"/>
    </location>
    <ligand>
        <name>ATP</name>
        <dbReference type="ChEBI" id="CHEBI:30616"/>
    </ligand>
</feature>
<feature type="binding site" evidence="1">
    <location>
        <position position="171"/>
    </location>
    <ligand>
        <name>ATP</name>
        <dbReference type="ChEBI" id="CHEBI:30616"/>
    </ligand>
</feature>
<feature type="binding site" evidence="1">
    <location>
        <position position="181"/>
    </location>
    <ligand>
        <name>ATP</name>
        <dbReference type="ChEBI" id="CHEBI:30616"/>
    </ligand>
</feature>
<feature type="binding site" evidence="1">
    <location>
        <position position="218"/>
    </location>
    <ligand>
        <name>ATP</name>
        <dbReference type="ChEBI" id="CHEBI:30616"/>
    </ligand>
</feature>
<feature type="binding site" evidence="1">
    <location>
        <position position="291"/>
    </location>
    <ligand>
        <name>DNA</name>
        <dbReference type="ChEBI" id="CHEBI:16991"/>
    </ligand>
</feature>
<feature type="binding site" evidence="1">
    <location>
        <position position="310"/>
    </location>
    <ligand>
        <name>DNA</name>
        <dbReference type="ChEBI" id="CHEBI:16991"/>
    </ligand>
</feature>
<feature type="binding site" evidence="1">
    <location>
        <position position="315"/>
    </location>
    <ligand>
        <name>DNA</name>
        <dbReference type="ChEBI" id="CHEBI:16991"/>
    </ligand>
</feature>
<dbReference type="EC" id="3.6.4.-" evidence="1"/>
<dbReference type="EMBL" id="CP000425">
    <property type="protein sequence ID" value="ABJ73945.1"/>
    <property type="molecule type" value="Genomic_DNA"/>
</dbReference>
<dbReference type="RefSeq" id="WP_011677254.1">
    <property type="nucleotide sequence ID" value="NC_008527.1"/>
</dbReference>
<dbReference type="SMR" id="Q02VS7"/>
<dbReference type="KEGG" id="llc:LACR_2515"/>
<dbReference type="HOGENOM" id="CLU_055599_1_0_9"/>
<dbReference type="Proteomes" id="UP000000240">
    <property type="component" value="Chromosome"/>
</dbReference>
<dbReference type="GO" id="GO:0005737">
    <property type="term" value="C:cytoplasm"/>
    <property type="evidence" value="ECO:0007669"/>
    <property type="project" value="UniProtKB-SubCell"/>
</dbReference>
<dbReference type="GO" id="GO:0048476">
    <property type="term" value="C:Holliday junction resolvase complex"/>
    <property type="evidence" value="ECO:0007669"/>
    <property type="project" value="UniProtKB-UniRule"/>
</dbReference>
<dbReference type="GO" id="GO:0005524">
    <property type="term" value="F:ATP binding"/>
    <property type="evidence" value="ECO:0007669"/>
    <property type="project" value="UniProtKB-UniRule"/>
</dbReference>
<dbReference type="GO" id="GO:0016887">
    <property type="term" value="F:ATP hydrolysis activity"/>
    <property type="evidence" value="ECO:0007669"/>
    <property type="project" value="InterPro"/>
</dbReference>
<dbReference type="GO" id="GO:0000400">
    <property type="term" value="F:four-way junction DNA binding"/>
    <property type="evidence" value="ECO:0007669"/>
    <property type="project" value="UniProtKB-UniRule"/>
</dbReference>
<dbReference type="GO" id="GO:0009378">
    <property type="term" value="F:four-way junction helicase activity"/>
    <property type="evidence" value="ECO:0007669"/>
    <property type="project" value="InterPro"/>
</dbReference>
<dbReference type="GO" id="GO:0006310">
    <property type="term" value="P:DNA recombination"/>
    <property type="evidence" value="ECO:0007669"/>
    <property type="project" value="UniProtKB-UniRule"/>
</dbReference>
<dbReference type="GO" id="GO:0006281">
    <property type="term" value="P:DNA repair"/>
    <property type="evidence" value="ECO:0007669"/>
    <property type="project" value="UniProtKB-UniRule"/>
</dbReference>
<dbReference type="CDD" id="cd00009">
    <property type="entry name" value="AAA"/>
    <property type="match status" value="1"/>
</dbReference>
<dbReference type="Gene3D" id="1.10.8.60">
    <property type="match status" value="1"/>
</dbReference>
<dbReference type="Gene3D" id="3.40.50.300">
    <property type="entry name" value="P-loop containing nucleotide triphosphate hydrolases"/>
    <property type="match status" value="1"/>
</dbReference>
<dbReference type="Gene3D" id="1.10.10.10">
    <property type="entry name" value="Winged helix-like DNA-binding domain superfamily/Winged helix DNA-binding domain"/>
    <property type="match status" value="1"/>
</dbReference>
<dbReference type="HAMAP" id="MF_00016">
    <property type="entry name" value="DNA_HJ_migration_RuvB"/>
    <property type="match status" value="1"/>
</dbReference>
<dbReference type="InterPro" id="IPR003593">
    <property type="entry name" value="AAA+_ATPase"/>
</dbReference>
<dbReference type="InterPro" id="IPR041445">
    <property type="entry name" value="AAA_lid_4"/>
</dbReference>
<dbReference type="InterPro" id="IPR004605">
    <property type="entry name" value="DNA_helicase_Holl-junc_RuvB"/>
</dbReference>
<dbReference type="InterPro" id="IPR027417">
    <property type="entry name" value="P-loop_NTPase"/>
</dbReference>
<dbReference type="InterPro" id="IPR008824">
    <property type="entry name" value="RuvB-like_N"/>
</dbReference>
<dbReference type="InterPro" id="IPR008823">
    <property type="entry name" value="RuvB_C"/>
</dbReference>
<dbReference type="InterPro" id="IPR036388">
    <property type="entry name" value="WH-like_DNA-bd_sf"/>
</dbReference>
<dbReference type="InterPro" id="IPR036390">
    <property type="entry name" value="WH_DNA-bd_sf"/>
</dbReference>
<dbReference type="NCBIfam" id="NF000868">
    <property type="entry name" value="PRK00080.1"/>
    <property type="match status" value="1"/>
</dbReference>
<dbReference type="NCBIfam" id="TIGR00635">
    <property type="entry name" value="ruvB"/>
    <property type="match status" value="1"/>
</dbReference>
<dbReference type="PANTHER" id="PTHR42848">
    <property type="match status" value="1"/>
</dbReference>
<dbReference type="PANTHER" id="PTHR42848:SF1">
    <property type="entry name" value="HOLLIDAY JUNCTION BRANCH MIGRATION COMPLEX SUBUNIT RUVB"/>
    <property type="match status" value="1"/>
</dbReference>
<dbReference type="Pfam" id="PF17864">
    <property type="entry name" value="AAA_lid_4"/>
    <property type="match status" value="1"/>
</dbReference>
<dbReference type="Pfam" id="PF05491">
    <property type="entry name" value="RuvB_C"/>
    <property type="match status" value="1"/>
</dbReference>
<dbReference type="Pfam" id="PF05496">
    <property type="entry name" value="RuvB_N"/>
    <property type="match status" value="1"/>
</dbReference>
<dbReference type="SMART" id="SM00382">
    <property type="entry name" value="AAA"/>
    <property type="match status" value="1"/>
</dbReference>
<dbReference type="SUPFAM" id="SSF52540">
    <property type="entry name" value="P-loop containing nucleoside triphosphate hydrolases"/>
    <property type="match status" value="1"/>
</dbReference>
<dbReference type="SUPFAM" id="SSF46785">
    <property type="entry name" value="Winged helix' DNA-binding domain"/>
    <property type="match status" value="1"/>
</dbReference>
<organism>
    <name type="scientific">Lactococcus lactis subsp. cremoris (strain SK11)</name>
    <dbReference type="NCBI Taxonomy" id="272622"/>
    <lineage>
        <taxon>Bacteria</taxon>
        <taxon>Bacillati</taxon>
        <taxon>Bacillota</taxon>
        <taxon>Bacilli</taxon>
        <taxon>Lactobacillales</taxon>
        <taxon>Streptococcaceae</taxon>
        <taxon>Lactococcus</taxon>
        <taxon>Lactococcus cremoris subsp. cremoris</taxon>
    </lineage>
</organism>
<protein>
    <recommendedName>
        <fullName evidence="1">Holliday junction branch migration complex subunit RuvB</fullName>
        <ecNumber evidence="1">3.6.4.-</ecNumber>
    </recommendedName>
</protein>
<accession>Q02VS7</accession>